<evidence type="ECO:0000255" key="1">
    <source>
        <dbReference type="HAMAP-Rule" id="MF_00706"/>
    </source>
</evidence>
<comment type="function">
    <text evidence="1">General inhibitor of pancreatic serine proteases: inhibits chymotrypsin, trypsin, elastases, factor X, kallikrein as well as a variety of other proteases.</text>
</comment>
<comment type="subunit">
    <text evidence="1">Homodimer.</text>
</comment>
<comment type="subcellular location">
    <subcellularLocation>
        <location evidence="1">Periplasm</location>
    </subcellularLocation>
</comment>
<comment type="similarity">
    <text evidence="1">Belongs to the protease inhibitor I11 (ecotin) family.</text>
</comment>
<feature type="signal peptide" evidence="1">
    <location>
        <begin position="1"/>
        <end position="20"/>
    </location>
</feature>
<feature type="chain" id="PRO_1000132356" description="Ecotin">
    <location>
        <begin position="21"/>
        <end position="162"/>
    </location>
</feature>
<feature type="site" description="Reactive bond" evidence="1">
    <location>
        <begin position="104"/>
        <end position="105"/>
    </location>
</feature>
<feature type="disulfide bond" evidence="1">
    <location>
        <begin position="70"/>
        <end position="107"/>
    </location>
</feature>
<proteinExistence type="inferred from homology"/>
<keyword id="KW-1015">Disulfide bond</keyword>
<keyword id="KW-0574">Periplasm</keyword>
<keyword id="KW-0646">Protease inhibitor</keyword>
<keyword id="KW-0722">Serine protease inhibitor</keyword>
<keyword id="KW-0732">Signal</keyword>
<organism>
    <name type="scientific">Escherichia coli O157:H7 (strain EC4115 / EHEC)</name>
    <dbReference type="NCBI Taxonomy" id="444450"/>
    <lineage>
        <taxon>Bacteria</taxon>
        <taxon>Pseudomonadati</taxon>
        <taxon>Pseudomonadota</taxon>
        <taxon>Gammaproteobacteria</taxon>
        <taxon>Enterobacterales</taxon>
        <taxon>Enterobacteriaceae</taxon>
        <taxon>Escherichia</taxon>
    </lineage>
</organism>
<accession>B5YX01</accession>
<gene>
    <name evidence="1" type="primary">eco</name>
    <name type="ordered locus">ECH74115_3347</name>
</gene>
<name>ECOT_ECO5E</name>
<sequence>MKTILPAVLFAAFATTSAWAAESVQPLEKIAPYPQAEKGMKRQVIQLTPQEDESTLKVELLIGQTLEVDCNLHRLGGKLESKTLEGWGYDYYVFDKVSSPVSTMMACPDGKKEKKFVTAYLGDTGMLRYNSKLPIVVYTPDNVDVKYRVWKAEEKIDNAVVR</sequence>
<dbReference type="EMBL" id="CP001164">
    <property type="protein sequence ID" value="ACI36254.1"/>
    <property type="molecule type" value="Genomic_DNA"/>
</dbReference>
<dbReference type="RefSeq" id="WP_000849216.1">
    <property type="nucleotide sequence ID" value="NC_011353.1"/>
</dbReference>
<dbReference type="SMR" id="B5YX01"/>
<dbReference type="MEROPS" id="I11.001"/>
<dbReference type="GeneID" id="75172337"/>
<dbReference type="KEGG" id="ecf:ECH74115_3347"/>
<dbReference type="HOGENOM" id="CLU_111565_0_0_6"/>
<dbReference type="GO" id="GO:0042597">
    <property type="term" value="C:periplasmic space"/>
    <property type="evidence" value="ECO:0007669"/>
    <property type="project" value="UniProtKB-SubCell"/>
</dbReference>
<dbReference type="GO" id="GO:0004867">
    <property type="term" value="F:serine-type endopeptidase inhibitor activity"/>
    <property type="evidence" value="ECO:0007669"/>
    <property type="project" value="UniProtKB-UniRule"/>
</dbReference>
<dbReference type="CDD" id="cd00242">
    <property type="entry name" value="Ecotin"/>
    <property type="match status" value="1"/>
</dbReference>
<dbReference type="FunFam" id="2.60.40.550:FF:000001">
    <property type="entry name" value="Ecotin"/>
    <property type="match status" value="1"/>
</dbReference>
<dbReference type="FunFam" id="4.10.1230.10:FF:000001">
    <property type="entry name" value="Ecotin"/>
    <property type="match status" value="1"/>
</dbReference>
<dbReference type="Gene3D" id="2.60.40.550">
    <property type="entry name" value="Ecotin"/>
    <property type="match status" value="1"/>
</dbReference>
<dbReference type="Gene3D" id="4.10.1230.10">
    <property type="entry name" value="Ecotin, trypsin inhibitor"/>
    <property type="match status" value="1"/>
</dbReference>
<dbReference type="HAMAP" id="MF_00706">
    <property type="entry name" value="Ecotin"/>
    <property type="match status" value="1"/>
</dbReference>
<dbReference type="InterPro" id="IPR027438">
    <property type="entry name" value="Ecotin_C"/>
</dbReference>
<dbReference type="InterPro" id="IPR036198">
    <property type="entry name" value="Ecotin_sf"/>
</dbReference>
<dbReference type="InterPro" id="IPR005658">
    <property type="entry name" value="Prot_inh_ecotin"/>
</dbReference>
<dbReference type="InterPro" id="IPR023084">
    <property type="entry name" value="Prot_inh_ecotin_gammaproteobac"/>
</dbReference>
<dbReference type="NCBIfam" id="NF002987">
    <property type="entry name" value="PRK03719.1"/>
    <property type="match status" value="1"/>
</dbReference>
<dbReference type="PANTHER" id="PTHR35890">
    <property type="match status" value="1"/>
</dbReference>
<dbReference type="PANTHER" id="PTHR35890:SF3">
    <property type="entry name" value="ECOTIN"/>
    <property type="match status" value="1"/>
</dbReference>
<dbReference type="Pfam" id="PF03974">
    <property type="entry name" value="Ecotin"/>
    <property type="match status" value="1"/>
</dbReference>
<dbReference type="PIRSF" id="PIRSF006865">
    <property type="entry name" value="Prot_inh_ecotin"/>
    <property type="match status" value="1"/>
</dbReference>
<dbReference type="SUPFAM" id="SSF49772">
    <property type="entry name" value="Ecotin, trypsin inhibitor"/>
    <property type="match status" value="1"/>
</dbReference>
<reference key="1">
    <citation type="journal article" date="2011" name="Proc. Natl. Acad. Sci. U.S.A.">
        <title>Genomic anatomy of Escherichia coli O157:H7 outbreaks.</title>
        <authorList>
            <person name="Eppinger M."/>
            <person name="Mammel M.K."/>
            <person name="Leclerc J.E."/>
            <person name="Ravel J."/>
            <person name="Cebula T.A."/>
        </authorList>
    </citation>
    <scope>NUCLEOTIDE SEQUENCE [LARGE SCALE GENOMIC DNA]</scope>
    <source>
        <strain>EC4115 / EHEC</strain>
    </source>
</reference>
<protein>
    <recommendedName>
        <fullName evidence="1">Ecotin</fullName>
    </recommendedName>
</protein>